<reference key="1">
    <citation type="journal article" date="2003" name="Sheng Wu Hua Xue Yu Sheng Wu Wu Li Xue Bao">
        <title>Identification of a novel human zinc finger protein gene ZNF313.</title>
        <authorList>
            <person name="Ma Y.-X."/>
            <person name="Zhang S."/>
            <person name="Hou Y."/>
            <person name="Huang X."/>
            <person name="Wu Q."/>
            <person name="Sun Y."/>
        </authorList>
    </citation>
    <scope>NUCLEOTIDE SEQUENCE [MRNA] (ISOFORM 1)</scope>
    <source>
        <tissue>Testis</tissue>
    </source>
</reference>
<reference key="2">
    <citation type="journal article" date="2007" name="BMC Genomics">
        <title>The full-ORF clone resource of the German cDNA consortium.</title>
        <authorList>
            <person name="Bechtel S."/>
            <person name="Rosenfelder H."/>
            <person name="Duda A."/>
            <person name="Schmidt C.P."/>
            <person name="Ernst U."/>
            <person name="Wellenreuther R."/>
            <person name="Mehrle A."/>
            <person name="Schuster C."/>
            <person name="Bahr A."/>
            <person name="Bloecker H."/>
            <person name="Heubner D."/>
            <person name="Hoerlein A."/>
            <person name="Michel G."/>
            <person name="Wedler H."/>
            <person name="Koehrer K."/>
            <person name="Ottenwaelder B."/>
            <person name="Poustka A."/>
            <person name="Wiemann S."/>
            <person name="Schupp I."/>
        </authorList>
    </citation>
    <scope>NUCLEOTIDE SEQUENCE [LARGE SCALE MRNA] (ISOFORM 1)</scope>
    <source>
        <tissue>Endometrial tumor</tissue>
    </source>
</reference>
<reference key="3">
    <citation type="submission" date="2003-05" db="EMBL/GenBank/DDBJ databases">
        <title>Cloning of human full-length CDSs in BD Creator(TM) system donor vector.</title>
        <authorList>
            <person name="Kalnine N."/>
            <person name="Chen X."/>
            <person name="Rolfs A."/>
            <person name="Halleck A."/>
            <person name="Hines L."/>
            <person name="Eisenstein S."/>
            <person name="Koundinya M."/>
            <person name="Raphael J."/>
            <person name="Moreira D."/>
            <person name="Kelley T."/>
            <person name="LaBaer J."/>
            <person name="Lin Y."/>
            <person name="Phelan M."/>
            <person name="Farmer A."/>
        </authorList>
    </citation>
    <scope>NUCLEOTIDE SEQUENCE [LARGE SCALE MRNA] (ISOFORM 1)</scope>
</reference>
<reference key="4">
    <citation type="journal article" date="2004" name="Nat. Genet.">
        <title>Complete sequencing and characterization of 21,243 full-length human cDNAs.</title>
        <authorList>
            <person name="Ota T."/>
            <person name="Suzuki Y."/>
            <person name="Nishikawa T."/>
            <person name="Otsuki T."/>
            <person name="Sugiyama T."/>
            <person name="Irie R."/>
            <person name="Wakamatsu A."/>
            <person name="Hayashi K."/>
            <person name="Sato H."/>
            <person name="Nagai K."/>
            <person name="Kimura K."/>
            <person name="Makita H."/>
            <person name="Sekine M."/>
            <person name="Obayashi M."/>
            <person name="Nishi T."/>
            <person name="Shibahara T."/>
            <person name="Tanaka T."/>
            <person name="Ishii S."/>
            <person name="Yamamoto J."/>
            <person name="Saito K."/>
            <person name="Kawai Y."/>
            <person name="Isono Y."/>
            <person name="Nakamura Y."/>
            <person name="Nagahari K."/>
            <person name="Murakami K."/>
            <person name="Yasuda T."/>
            <person name="Iwayanagi T."/>
            <person name="Wagatsuma M."/>
            <person name="Shiratori A."/>
            <person name="Sudo H."/>
            <person name="Hosoiri T."/>
            <person name="Kaku Y."/>
            <person name="Kodaira H."/>
            <person name="Kondo H."/>
            <person name="Sugawara M."/>
            <person name="Takahashi M."/>
            <person name="Kanda K."/>
            <person name="Yokoi T."/>
            <person name="Furuya T."/>
            <person name="Kikkawa E."/>
            <person name="Omura Y."/>
            <person name="Abe K."/>
            <person name="Kamihara K."/>
            <person name="Katsuta N."/>
            <person name="Sato K."/>
            <person name="Tanikawa M."/>
            <person name="Yamazaki M."/>
            <person name="Ninomiya K."/>
            <person name="Ishibashi T."/>
            <person name="Yamashita H."/>
            <person name="Murakawa K."/>
            <person name="Fujimori K."/>
            <person name="Tanai H."/>
            <person name="Kimata M."/>
            <person name="Watanabe M."/>
            <person name="Hiraoka S."/>
            <person name="Chiba Y."/>
            <person name="Ishida S."/>
            <person name="Ono Y."/>
            <person name="Takiguchi S."/>
            <person name="Watanabe S."/>
            <person name="Yosida M."/>
            <person name="Hotuta T."/>
            <person name="Kusano J."/>
            <person name="Kanehori K."/>
            <person name="Takahashi-Fujii A."/>
            <person name="Hara H."/>
            <person name="Tanase T.-O."/>
            <person name="Nomura Y."/>
            <person name="Togiya S."/>
            <person name="Komai F."/>
            <person name="Hara R."/>
            <person name="Takeuchi K."/>
            <person name="Arita M."/>
            <person name="Imose N."/>
            <person name="Musashino K."/>
            <person name="Yuuki H."/>
            <person name="Oshima A."/>
            <person name="Sasaki N."/>
            <person name="Aotsuka S."/>
            <person name="Yoshikawa Y."/>
            <person name="Matsunawa H."/>
            <person name="Ichihara T."/>
            <person name="Shiohata N."/>
            <person name="Sano S."/>
            <person name="Moriya S."/>
            <person name="Momiyama H."/>
            <person name="Satoh N."/>
            <person name="Takami S."/>
            <person name="Terashima Y."/>
            <person name="Suzuki O."/>
            <person name="Nakagawa S."/>
            <person name="Senoh A."/>
            <person name="Mizoguchi H."/>
            <person name="Goto Y."/>
            <person name="Shimizu F."/>
            <person name="Wakebe H."/>
            <person name="Hishigaki H."/>
            <person name="Watanabe T."/>
            <person name="Sugiyama A."/>
            <person name="Takemoto M."/>
            <person name="Kawakami B."/>
            <person name="Yamazaki M."/>
            <person name="Watanabe K."/>
            <person name="Kumagai A."/>
            <person name="Itakura S."/>
            <person name="Fukuzumi Y."/>
            <person name="Fujimori Y."/>
            <person name="Komiyama M."/>
            <person name="Tashiro H."/>
            <person name="Tanigami A."/>
            <person name="Fujiwara T."/>
            <person name="Ono T."/>
            <person name="Yamada K."/>
            <person name="Fujii Y."/>
            <person name="Ozaki K."/>
            <person name="Hirao M."/>
            <person name="Ohmori Y."/>
            <person name="Kawabata A."/>
            <person name="Hikiji T."/>
            <person name="Kobatake N."/>
            <person name="Inagaki H."/>
            <person name="Ikema Y."/>
            <person name="Okamoto S."/>
            <person name="Okitani R."/>
            <person name="Kawakami T."/>
            <person name="Noguchi S."/>
            <person name="Itoh T."/>
            <person name="Shigeta K."/>
            <person name="Senba T."/>
            <person name="Matsumura K."/>
            <person name="Nakajima Y."/>
            <person name="Mizuno T."/>
            <person name="Morinaga M."/>
            <person name="Sasaki M."/>
            <person name="Togashi T."/>
            <person name="Oyama M."/>
            <person name="Hata H."/>
            <person name="Watanabe M."/>
            <person name="Komatsu T."/>
            <person name="Mizushima-Sugano J."/>
            <person name="Satoh T."/>
            <person name="Shirai Y."/>
            <person name="Takahashi Y."/>
            <person name="Nakagawa K."/>
            <person name="Okumura K."/>
            <person name="Nagase T."/>
            <person name="Nomura N."/>
            <person name="Kikuchi H."/>
            <person name="Masuho Y."/>
            <person name="Yamashita R."/>
            <person name="Nakai K."/>
            <person name="Yada T."/>
            <person name="Nakamura Y."/>
            <person name="Ohara O."/>
            <person name="Isogai T."/>
            <person name="Sugano S."/>
        </authorList>
    </citation>
    <scope>NUCLEOTIDE SEQUENCE [LARGE SCALE MRNA] (ISOFORMS 1 AND 2)</scope>
    <source>
        <tissue>Synovium</tissue>
        <tissue>Testis</tissue>
    </source>
</reference>
<reference key="5">
    <citation type="journal article" date="2001" name="Nature">
        <title>The DNA sequence and comparative analysis of human chromosome 20.</title>
        <authorList>
            <person name="Deloukas P."/>
            <person name="Matthews L.H."/>
            <person name="Ashurst J.L."/>
            <person name="Burton J."/>
            <person name="Gilbert J.G.R."/>
            <person name="Jones M."/>
            <person name="Stavrides G."/>
            <person name="Almeida J.P."/>
            <person name="Babbage A.K."/>
            <person name="Bagguley C.L."/>
            <person name="Bailey J."/>
            <person name="Barlow K.F."/>
            <person name="Bates K.N."/>
            <person name="Beard L.M."/>
            <person name="Beare D.M."/>
            <person name="Beasley O.P."/>
            <person name="Bird C.P."/>
            <person name="Blakey S.E."/>
            <person name="Bridgeman A.M."/>
            <person name="Brown A.J."/>
            <person name="Buck D."/>
            <person name="Burrill W.D."/>
            <person name="Butler A.P."/>
            <person name="Carder C."/>
            <person name="Carter N.P."/>
            <person name="Chapman J.C."/>
            <person name="Clamp M."/>
            <person name="Clark G."/>
            <person name="Clark L.N."/>
            <person name="Clark S.Y."/>
            <person name="Clee C.M."/>
            <person name="Clegg S."/>
            <person name="Cobley V.E."/>
            <person name="Collier R.E."/>
            <person name="Connor R.E."/>
            <person name="Corby N.R."/>
            <person name="Coulson A."/>
            <person name="Coville G.J."/>
            <person name="Deadman R."/>
            <person name="Dhami P.D."/>
            <person name="Dunn M."/>
            <person name="Ellington A.G."/>
            <person name="Frankland J.A."/>
            <person name="Fraser A."/>
            <person name="French L."/>
            <person name="Garner P."/>
            <person name="Grafham D.V."/>
            <person name="Griffiths C."/>
            <person name="Griffiths M.N.D."/>
            <person name="Gwilliam R."/>
            <person name="Hall R.E."/>
            <person name="Hammond S."/>
            <person name="Harley J.L."/>
            <person name="Heath P.D."/>
            <person name="Ho S."/>
            <person name="Holden J.L."/>
            <person name="Howden P.J."/>
            <person name="Huckle E."/>
            <person name="Hunt A.R."/>
            <person name="Hunt S.E."/>
            <person name="Jekosch K."/>
            <person name="Johnson C.M."/>
            <person name="Johnson D."/>
            <person name="Kay M.P."/>
            <person name="Kimberley A.M."/>
            <person name="King A."/>
            <person name="Knights A."/>
            <person name="Laird G.K."/>
            <person name="Lawlor S."/>
            <person name="Lehvaeslaiho M.H."/>
            <person name="Leversha M.A."/>
            <person name="Lloyd C."/>
            <person name="Lloyd D.M."/>
            <person name="Lovell J.D."/>
            <person name="Marsh V.L."/>
            <person name="Martin S.L."/>
            <person name="McConnachie L.J."/>
            <person name="McLay K."/>
            <person name="McMurray A.A."/>
            <person name="Milne S.A."/>
            <person name="Mistry D."/>
            <person name="Moore M.J.F."/>
            <person name="Mullikin J.C."/>
            <person name="Nickerson T."/>
            <person name="Oliver K."/>
            <person name="Parker A."/>
            <person name="Patel R."/>
            <person name="Pearce T.A.V."/>
            <person name="Peck A.I."/>
            <person name="Phillimore B.J.C.T."/>
            <person name="Prathalingam S.R."/>
            <person name="Plumb R.W."/>
            <person name="Ramsay H."/>
            <person name="Rice C.M."/>
            <person name="Ross M.T."/>
            <person name="Scott C.E."/>
            <person name="Sehra H.K."/>
            <person name="Shownkeen R."/>
            <person name="Sims S."/>
            <person name="Skuce C.D."/>
            <person name="Smith M.L."/>
            <person name="Soderlund C."/>
            <person name="Steward C.A."/>
            <person name="Sulston J.E."/>
            <person name="Swann R.M."/>
            <person name="Sycamore N."/>
            <person name="Taylor R."/>
            <person name="Tee L."/>
            <person name="Thomas D.W."/>
            <person name="Thorpe A."/>
            <person name="Tracey A."/>
            <person name="Tromans A.C."/>
            <person name="Vaudin M."/>
            <person name="Wall M."/>
            <person name="Wallis J.M."/>
            <person name="Whitehead S.L."/>
            <person name="Whittaker P."/>
            <person name="Willey D.L."/>
            <person name="Williams L."/>
            <person name="Williams S.A."/>
            <person name="Wilming L."/>
            <person name="Wray P.W."/>
            <person name="Hubbard T."/>
            <person name="Durbin R.M."/>
            <person name="Bentley D.R."/>
            <person name="Beck S."/>
            <person name="Rogers J."/>
        </authorList>
    </citation>
    <scope>NUCLEOTIDE SEQUENCE [LARGE SCALE GENOMIC DNA]</scope>
</reference>
<reference key="6">
    <citation type="submission" date="2005-09" db="EMBL/GenBank/DDBJ databases">
        <authorList>
            <person name="Mural R.J."/>
            <person name="Istrail S."/>
            <person name="Sutton G.G."/>
            <person name="Florea L."/>
            <person name="Halpern A.L."/>
            <person name="Mobarry C.M."/>
            <person name="Lippert R."/>
            <person name="Walenz B."/>
            <person name="Shatkay H."/>
            <person name="Dew I."/>
            <person name="Miller J.R."/>
            <person name="Flanigan M.J."/>
            <person name="Edwards N.J."/>
            <person name="Bolanos R."/>
            <person name="Fasulo D."/>
            <person name="Halldorsson B.V."/>
            <person name="Hannenhalli S."/>
            <person name="Turner R."/>
            <person name="Yooseph S."/>
            <person name="Lu F."/>
            <person name="Nusskern D.R."/>
            <person name="Shue B.C."/>
            <person name="Zheng X.H."/>
            <person name="Zhong F."/>
            <person name="Delcher A.L."/>
            <person name="Huson D.H."/>
            <person name="Kravitz S.A."/>
            <person name="Mouchard L."/>
            <person name="Reinert K."/>
            <person name="Remington K.A."/>
            <person name="Clark A.G."/>
            <person name="Waterman M.S."/>
            <person name="Eichler E.E."/>
            <person name="Adams M.D."/>
            <person name="Hunkapiller M.W."/>
            <person name="Myers E.W."/>
            <person name="Venter J.C."/>
        </authorList>
    </citation>
    <scope>NUCLEOTIDE SEQUENCE [LARGE SCALE GENOMIC DNA]</scope>
</reference>
<reference key="7">
    <citation type="journal article" date="2004" name="Genome Res.">
        <title>The status, quality, and expansion of the NIH full-length cDNA project: the Mammalian Gene Collection (MGC).</title>
        <authorList>
            <consortium name="The MGC Project Team"/>
        </authorList>
    </citation>
    <scope>NUCLEOTIDE SEQUENCE [LARGE SCALE MRNA] (ISOFORM 1)</scope>
    <source>
        <tissue>Brain</tissue>
        <tissue>Ovary</tissue>
    </source>
</reference>
<reference key="8">
    <citation type="journal article" date="2008" name="Hum. Mol. Genet.">
        <title>Identification of ZNF313/RNF114 as a novel psoriasis susceptibility gene.</title>
        <authorList>
            <person name="Capon F."/>
            <person name="Bijlmakers M.-J."/>
            <person name="Wolf N."/>
            <person name="Quaranta M."/>
            <person name="Huffmeier U."/>
            <person name="Allen M."/>
            <person name="Timms K."/>
            <person name="Abkevich V."/>
            <person name="Gutin A."/>
            <person name="Smith R."/>
            <person name="Warren R.B."/>
            <person name="Young H.S."/>
            <person name="Worthington J."/>
            <person name="Burden A.D."/>
            <person name="Griffiths C.E.M."/>
            <person name="Hayday A."/>
            <person name="Nestle F.O."/>
            <person name="Reis A."/>
            <person name="Lanchbury J."/>
            <person name="Barker J.N."/>
            <person name="Trembath R.C."/>
        </authorList>
    </citation>
    <scope>TISSUE SPECIFICITY</scope>
</reference>
<reference key="9">
    <citation type="journal article" date="2009" name="Science">
        <title>Lysine acetylation targets protein complexes and co-regulates major cellular functions.</title>
        <authorList>
            <person name="Choudhary C."/>
            <person name="Kumar C."/>
            <person name="Gnad F."/>
            <person name="Nielsen M.L."/>
            <person name="Rehman M."/>
            <person name="Walther T.C."/>
            <person name="Olsen J.V."/>
            <person name="Mann M."/>
        </authorList>
    </citation>
    <scope>ACETYLATION [LARGE SCALE ANALYSIS] AT LYS-102 AND LYS-112</scope>
    <scope>IDENTIFICATION BY MASS SPECTROMETRY [LARGE SCALE ANALYSIS]</scope>
</reference>
<reference key="10">
    <citation type="journal article" date="2011" name="BMC Syst. Biol.">
        <title>Initial characterization of the human central proteome.</title>
        <authorList>
            <person name="Burkard T.R."/>
            <person name="Planyavsky M."/>
            <person name="Kaupe I."/>
            <person name="Breitwieser F.P."/>
            <person name="Buerckstuemmer T."/>
            <person name="Bennett K.L."/>
            <person name="Superti-Furga G."/>
            <person name="Colinge J."/>
        </authorList>
    </citation>
    <scope>IDENTIFICATION BY MASS SPECTROMETRY [LARGE SCALE ANALYSIS]</scope>
</reference>
<reference key="11">
    <citation type="journal article" date="2013" name="Cell Death Differ.">
        <title>ZNF313 is a novel cell cycle activator with an E3 ligase activity inhibiting cellular senescence by destabilizing p21(WAF1.).</title>
        <authorList>
            <person name="Han J."/>
            <person name="Kim Y.L."/>
            <person name="Lee K.W."/>
            <person name="Her N.G."/>
            <person name="Ha T.K."/>
            <person name="Yoon S."/>
            <person name="Jeong S.I."/>
            <person name="Lee J.H."/>
            <person name="Kang M.J."/>
            <person name="Lee M.G."/>
            <person name="Ryu B.K."/>
            <person name="Baik J.H."/>
            <person name="Chi S.G."/>
        </authorList>
    </citation>
    <scope>FUNCTION</scope>
    <scope>UBIQUITINATION</scope>
    <scope>SUBCELLULAR LOCATION</scope>
    <scope>INTERACTION WITH XAF1</scope>
    <scope>CATALYTIC ACTIVITY</scope>
    <scope>PATHWAY</scope>
</reference>
<reference key="12">
    <citation type="journal article" date="2014" name="Cell Death Dis.">
        <title>The RING ubiquitin E3 RNF114 interacts with A20 and modulates NF-kappaB activity and T-cell activation.</title>
        <authorList>
            <person name="Rodriguez M.S."/>
            <person name="Egana I."/>
            <person name="Lopitz-Otsoa F."/>
            <person name="Aillet F."/>
            <person name="Lopez-Mato M.P."/>
            <person name="Dorronsoro A."/>
            <person name="Dorronroso A."/>
            <person name="Lobato-Gil S."/>
            <person name="Sutherland J.D."/>
            <person name="Barrio R."/>
            <person name="Trigueros C."/>
            <person name="Lang V."/>
        </authorList>
    </citation>
    <scope>FUNCTION</scope>
</reference>
<reference key="13">
    <citation type="journal article" date="2015" name="Proteomics">
        <title>N-terminome analysis of the human mitochondrial proteome.</title>
        <authorList>
            <person name="Vaca Jacome A.S."/>
            <person name="Rabilloud T."/>
            <person name="Schaeffer-Reiss C."/>
            <person name="Rompais M."/>
            <person name="Ayoub D."/>
            <person name="Lane L."/>
            <person name="Bairoch A."/>
            <person name="Van Dorsselaer A."/>
            <person name="Carapito C."/>
        </authorList>
    </citation>
    <scope>IDENTIFICATION BY MASS SPECTROMETRY [LARGE SCALE ANALYSIS]</scope>
</reference>
<reference key="14">
    <citation type="journal article" date="2017" name="Cytokine">
        <title>Negative regulation of the RLH signaling by the E3 ubiquitin ligase RNF114.</title>
        <authorList>
            <person name="Lin B."/>
            <person name="Ke Q."/>
            <person name="Li H."/>
            <person name="Pheifer N.S."/>
            <person name="Velliquette D.C."/>
            <person name="Leaman D.W."/>
        </authorList>
    </citation>
    <scope>FUNCTION</scope>
</reference>
<reference key="15">
    <citation type="journal article" date="2018" name="J. Orthop. Res.">
        <title>Regulation of RANKL-induced osteoclastogenesis by RING finger protein RNF114.</title>
        <authorList>
            <person name="Lin B."/>
            <person name="Ke Q."/>
            <person name="Leaman D.W."/>
            <person name="Goel V."/>
            <person name="Agarwal A."/>
        </authorList>
    </citation>
    <scope>FUNCTION</scope>
</reference>
<dbReference type="EC" id="2.3.2.27" evidence="4"/>
<dbReference type="EMBL" id="AF265215">
    <property type="protein sequence ID" value="AAF75763.1"/>
    <property type="molecule type" value="mRNA"/>
</dbReference>
<dbReference type="EMBL" id="BX640603">
    <property type="protein sequence ID" value="CAE45709.1"/>
    <property type="status" value="ALT_INIT"/>
    <property type="molecule type" value="mRNA"/>
</dbReference>
<dbReference type="EMBL" id="BT006795">
    <property type="protein sequence ID" value="AAP35441.1"/>
    <property type="molecule type" value="mRNA"/>
</dbReference>
<dbReference type="EMBL" id="AK315638">
    <property type="protein sequence ID" value="BAG38006.1"/>
    <property type="molecule type" value="mRNA"/>
</dbReference>
<dbReference type="EMBL" id="AK301731">
    <property type="protein sequence ID" value="BAG63197.1"/>
    <property type="molecule type" value="mRNA"/>
</dbReference>
<dbReference type="EMBL" id="AL031685">
    <property type="status" value="NOT_ANNOTATED_CDS"/>
    <property type="molecule type" value="Genomic_DNA"/>
</dbReference>
<dbReference type="EMBL" id="CH471077">
    <property type="protein sequence ID" value="EAW75641.1"/>
    <property type="molecule type" value="Genomic_DNA"/>
</dbReference>
<dbReference type="EMBL" id="CH471077">
    <property type="protein sequence ID" value="EAW75643.1"/>
    <property type="molecule type" value="Genomic_DNA"/>
</dbReference>
<dbReference type="EMBL" id="BC013695">
    <property type="protein sequence ID" value="AAH13695.1"/>
    <property type="molecule type" value="mRNA"/>
</dbReference>
<dbReference type="EMBL" id="BC066919">
    <property type="protein sequence ID" value="AAH66919.1"/>
    <property type="molecule type" value="mRNA"/>
</dbReference>
<dbReference type="CCDS" id="CCDS33482.1">
    <molecule id="Q9Y508-1"/>
</dbReference>
<dbReference type="RefSeq" id="NP_061153.1">
    <molecule id="Q9Y508-1"/>
    <property type="nucleotide sequence ID" value="NM_018683.4"/>
</dbReference>
<dbReference type="BioGRID" id="120991">
    <property type="interactions" value="102"/>
</dbReference>
<dbReference type="CORUM" id="Q9Y508"/>
<dbReference type="FunCoup" id="Q9Y508">
    <property type="interactions" value="1568"/>
</dbReference>
<dbReference type="IntAct" id="Q9Y508">
    <property type="interactions" value="55"/>
</dbReference>
<dbReference type="MINT" id="Q9Y508"/>
<dbReference type="STRING" id="9606.ENSP00000244061"/>
<dbReference type="BindingDB" id="Q9Y508"/>
<dbReference type="ChEMBL" id="CHEMBL5169207"/>
<dbReference type="GlyGen" id="Q9Y508">
    <property type="glycosylation" value="1 site, 1 O-linked glycan (1 site)"/>
</dbReference>
<dbReference type="iPTMnet" id="Q9Y508"/>
<dbReference type="PhosphoSitePlus" id="Q9Y508"/>
<dbReference type="BioMuta" id="RNF114"/>
<dbReference type="DMDM" id="20141070"/>
<dbReference type="jPOST" id="Q9Y508"/>
<dbReference type="MassIVE" id="Q9Y508"/>
<dbReference type="PaxDb" id="9606-ENSP00000244061"/>
<dbReference type="PeptideAtlas" id="Q9Y508"/>
<dbReference type="ProteomicsDB" id="86269">
    <molecule id="Q9Y508-1"/>
</dbReference>
<dbReference type="ProteomicsDB" id="86270">
    <molecule id="Q9Y508-2"/>
</dbReference>
<dbReference type="Pumba" id="Q9Y508"/>
<dbReference type="TopDownProteomics" id="Q9Y508-1">
    <molecule id="Q9Y508-1"/>
</dbReference>
<dbReference type="Antibodypedia" id="13722">
    <property type="antibodies" value="185 antibodies from 25 providers"/>
</dbReference>
<dbReference type="DNASU" id="55905"/>
<dbReference type="Ensembl" id="ENST00000244061.6">
    <molecule id="Q9Y508-1"/>
    <property type="protein sequence ID" value="ENSP00000244061.2"/>
    <property type="gene ID" value="ENSG00000124226.11"/>
</dbReference>
<dbReference type="GeneID" id="55905"/>
<dbReference type="KEGG" id="hsa:55905"/>
<dbReference type="MANE-Select" id="ENST00000244061.6">
    <property type="protein sequence ID" value="ENSP00000244061.2"/>
    <property type="RefSeq nucleotide sequence ID" value="NM_018683.4"/>
    <property type="RefSeq protein sequence ID" value="NP_061153.1"/>
</dbReference>
<dbReference type="UCSC" id="uc002xux.4">
    <molecule id="Q9Y508-1"/>
    <property type="organism name" value="human"/>
</dbReference>
<dbReference type="AGR" id="HGNC:13094"/>
<dbReference type="CTD" id="55905"/>
<dbReference type="DisGeNET" id="55905"/>
<dbReference type="GeneCards" id="RNF114"/>
<dbReference type="HGNC" id="HGNC:13094">
    <property type="gene designation" value="RNF114"/>
</dbReference>
<dbReference type="HPA" id="ENSG00000124226">
    <property type="expression patterns" value="Tissue enhanced (testis)"/>
</dbReference>
<dbReference type="MalaCards" id="RNF114"/>
<dbReference type="MIM" id="612451">
    <property type="type" value="gene"/>
</dbReference>
<dbReference type="neXtProt" id="NX_Q9Y508"/>
<dbReference type="OpenTargets" id="ENSG00000124226"/>
<dbReference type="PharmGKB" id="PA162401502"/>
<dbReference type="VEuPathDB" id="HostDB:ENSG00000124226"/>
<dbReference type="eggNOG" id="ENOG502QW3F">
    <property type="taxonomic scope" value="Eukaryota"/>
</dbReference>
<dbReference type="GeneTree" id="ENSGT00950000182909"/>
<dbReference type="HOGENOM" id="CLU_092448_1_0_1"/>
<dbReference type="InParanoid" id="Q9Y508"/>
<dbReference type="OMA" id="RTQCGHT"/>
<dbReference type="OrthoDB" id="6270329at2759"/>
<dbReference type="PAN-GO" id="Q9Y508">
    <property type="GO annotations" value="3 GO annotations based on evolutionary models"/>
</dbReference>
<dbReference type="PhylomeDB" id="Q9Y508"/>
<dbReference type="TreeFam" id="TF331012"/>
<dbReference type="PathwayCommons" id="Q9Y508"/>
<dbReference type="Reactome" id="R-HSA-983168">
    <property type="pathway name" value="Antigen processing: Ubiquitination &amp; Proteasome degradation"/>
</dbReference>
<dbReference type="SignaLink" id="Q9Y508"/>
<dbReference type="SIGNOR" id="Q9Y508"/>
<dbReference type="UniPathway" id="UPA00143"/>
<dbReference type="BioGRID-ORCS" id="55905">
    <property type="hits" value="23 hits in 1199 CRISPR screens"/>
</dbReference>
<dbReference type="CD-CODE" id="DEE660B4">
    <property type="entry name" value="Stress granule"/>
</dbReference>
<dbReference type="ChiTaRS" id="RNF114">
    <property type="organism name" value="human"/>
</dbReference>
<dbReference type="GenomeRNAi" id="55905"/>
<dbReference type="Pharos" id="Q9Y508">
    <property type="development level" value="Tbio"/>
</dbReference>
<dbReference type="PRO" id="PR:Q9Y508"/>
<dbReference type="Proteomes" id="UP000005640">
    <property type="component" value="Chromosome 20"/>
</dbReference>
<dbReference type="RNAct" id="Q9Y508">
    <property type="molecule type" value="protein"/>
</dbReference>
<dbReference type="Bgee" id="ENSG00000124226">
    <property type="expression patterns" value="Expressed in oocyte and 205 other cell types or tissues"/>
</dbReference>
<dbReference type="ExpressionAtlas" id="Q9Y508">
    <property type="expression patterns" value="baseline and differential"/>
</dbReference>
<dbReference type="GO" id="GO:0005829">
    <property type="term" value="C:cytosol"/>
    <property type="evidence" value="ECO:0000314"/>
    <property type="project" value="HPA"/>
</dbReference>
<dbReference type="GO" id="GO:0005634">
    <property type="term" value="C:nucleus"/>
    <property type="evidence" value="ECO:0007669"/>
    <property type="project" value="UniProtKB-SubCell"/>
</dbReference>
<dbReference type="GO" id="GO:0005886">
    <property type="term" value="C:plasma membrane"/>
    <property type="evidence" value="ECO:0000314"/>
    <property type="project" value="HPA"/>
</dbReference>
<dbReference type="GO" id="GO:0061630">
    <property type="term" value="F:ubiquitin protein ligase activity"/>
    <property type="evidence" value="ECO:0000318"/>
    <property type="project" value="GO_Central"/>
</dbReference>
<dbReference type="GO" id="GO:0008270">
    <property type="term" value="F:zinc ion binding"/>
    <property type="evidence" value="ECO:0007669"/>
    <property type="project" value="UniProtKB-KW"/>
</dbReference>
<dbReference type="GO" id="GO:0030154">
    <property type="term" value="P:cell differentiation"/>
    <property type="evidence" value="ECO:0007669"/>
    <property type="project" value="UniProtKB-KW"/>
</dbReference>
<dbReference type="GO" id="GO:0000209">
    <property type="term" value="P:protein polyubiquitination"/>
    <property type="evidence" value="ECO:0000318"/>
    <property type="project" value="GO_Central"/>
</dbReference>
<dbReference type="GO" id="GO:0007283">
    <property type="term" value="P:spermatogenesis"/>
    <property type="evidence" value="ECO:0007669"/>
    <property type="project" value="UniProtKB-KW"/>
</dbReference>
<dbReference type="GO" id="GO:0006511">
    <property type="term" value="P:ubiquitin-dependent protein catabolic process"/>
    <property type="evidence" value="ECO:0000318"/>
    <property type="project" value="GO_Central"/>
</dbReference>
<dbReference type="CDD" id="cd16540">
    <property type="entry name" value="RING-HC_RNF114"/>
    <property type="match status" value="1"/>
</dbReference>
<dbReference type="FunFam" id="3.30.40.10:FF:000408">
    <property type="entry name" value="E3 ubiquitin-protein ligase RNF114"/>
    <property type="match status" value="1"/>
</dbReference>
<dbReference type="Gene3D" id="3.30.40.10">
    <property type="entry name" value="Zinc/RING finger domain, C3HC4 (zinc finger)"/>
    <property type="match status" value="1"/>
</dbReference>
<dbReference type="InterPro" id="IPR008598">
    <property type="entry name" value="Di19_Zn-bd"/>
</dbReference>
<dbReference type="InterPro" id="IPR042716">
    <property type="entry name" value="RNF114_RING-HC"/>
</dbReference>
<dbReference type="InterPro" id="IPR051438">
    <property type="entry name" value="RNF_E3_ubiq-protein_ligase"/>
</dbReference>
<dbReference type="InterPro" id="IPR034734">
    <property type="entry name" value="ZF_C2HC_RNF"/>
</dbReference>
<dbReference type="InterPro" id="IPR027370">
    <property type="entry name" value="Znf-RING_euk"/>
</dbReference>
<dbReference type="InterPro" id="IPR001841">
    <property type="entry name" value="Znf_RING"/>
</dbReference>
<dbReference type="InterPro" id="IPR013083">
    <property type="entry name" value="Znf_RING/FYVE/PHD"/>
</dbReference>
<dbReference type="InterPro" id="IPR017907">
    <property type="entry name" value="Znf_RING_CS"/>
</dbReference>
<dbReference type="PANTHER" id="PTHR46016:SF3">
    <property type="entry name" value="E3 UBIQUITIN-PROTEIN LIGASE RNF114"/>
    <property type="match status" value="1"/>
</dbReference>
<dbReference type="PANTHER" id="PTHR46016">
    <property type="entry name" value="ZINC FINGER, RING/FYVE/PHD-TYPE"/>
    <property type="match status" value="1"/>
</dbReference>
<dbReference type="Pfam" id="PF05605">
    <property type="entry name" value="zf-Di19"/>
    <property type="match status" value="1"/>
</dbReference>
<dbReference type="Pfam" id="PF13445">
    <property type="entry name" value="zf-RING_UBOX"/>
    <property type="match status" value="1"/>
</dbReference>
<dbReference type="Pfam" id="PF18574">
    <property type="entry name" value="zf_C2HC_14"/>
    <property type="match status" value="1"/>
</dbReference>
<dbReference type="SMART" id="SM00184">
    <property type="entry name" value="RING"/>
    <property type="match status" value="1"/>
</dbReference>
<dbReference type="SUPFAM" id="SSF57850">
    <property type="entry name" value="RING/U-box"/>
    <property type="match status" value="1"/>
</dbReference>
<dbReference type="PROSITE" id="PS51803">
    <property type="entry name" value="ZF_C2HC_RNF"/>
    <property type="match status" value="1"/>
</dbReference>
<dbReference type="PROSITE" id="PS00518">
    <property type="entry name" value="ZF_RING_1"/>
    <property type="match status" value="1"/>
</dbReference>
<dbReference type="PROSITE" id="PS50089">
    <property type="entry name" value="ZF_RING_2"/>
    <property type="match status" value="1"/>
</dbReference>
<feature type="chain" id="PRO_0000056307" description="E3 ubiquitin-protein ligase RNF114">
    <location>
        <begin position="1"/>
        <end position="228"/>
    </location>
</feature>
<feature type="zinc finger region" description="RING-type" evidence="1">
    <location>
        <begin position="29"/>
        <end position="68"/>
    </location>
</feature>
<feature type="zinc finger region" description="C2HC RNF-type" evidence="2">
    <location>
        <begin position="91"/>
        <end position="110"/>
    </location>
</feature>
<feature type="binding site" evidence="2">
    <location>
        <position position="91"/>
    </location>
    <ligand>
        <name>Zn(2+)</name>
        <dbReference type="ChEBI" id="CHEBI:29105"/>
    </ligand>
</feature>
<feature type="binding site" evidence="2">
    <location>
        <position position="94"/>
    </location>
    <ligand>
        <name>Zn(2+)</name>
        <dbReference type="ChEBI" id="CHEBI:29105"/>
    </ligand>
</feature>
<feature type="binding site" evidence="2">
    <location>
        <position position="106"/>
    </location>
    <ligand>
        <name>Zn(2+)</name>
        <dbReference type="ChEBI" id="CHEBI:29105"/>
    </ligand>
</feature>
<feature type="binding site" evidence="2">
    <location>
        <position position="110"/>
    </location>
    <ligand>
        <name>Zn(2+)</name>
        <dbReference type="ChEBI" id="CHEBI:29105"/>
    </ligand>
</feature>
<feature type="modified residue" description="N6-acetyllysine" evidence="10">
    <location>
        <position position="102"/>
    </location>
</feature>
<feature type="modified residue" description="N6-acetyllysine" evidence="10">
    <location>
        <position position="112"/>
    </location>
</feature>
<feature type="splice variant" id="VSP_036843" description="In isoform 2." evidence="8">
    <original>CPICASMPWGDPNYRSANF</original>
    <variation>SEQSPCLLSVSCYRASITY</variation>
    <location>
        <begin position="173"/>
        <end position="191"/>
    </location>
</feature>
<feature type="splice variant" id="VSP_036844" description="In isoform 2." evidence="8">
    <location>
        <begin position="192"/>
        <end position="228"/>
    </location>
</feature>
<feature type="sequence conflict" description="In Ref. 2; CAE45709." evidence="9" ref="2">
    <original>Q</original>
    <variation>H</variation>
    <location>
        <position position="13"/>
    </location>
</feature>
<feature type="sequence conflict" description="In Ref. 2; CAE45709." evidence="9" ref="2">
    <original>E</original>
    <variation>K</variation>
    <location>
        <position position="20"/>
    </location>
</feature>
<feature type="sequence conflict" description="In Ref. 2; CAE45709." evidence="9" ref="2">
    <original>E</original>
    <variation>V</variation>
    <location>
        <position position="34"/>
    </location>
</feature>
<feature type="sequence conflict" description="In Ref. 2; CAE45709." evidence="9" ref="2">
    <original>T</original>
    <variation>A</variation>
    <location>
        <position position="205"/>
    </location>
</feature>
<keyword id="KW-0007">Acetylation</keyword>
<keyword id="KW-0025">Alternative splicing</keyword>
<keyword id="KW-0963">Cytoplasm</keyword>
<keyword id="KW-0217">Developmental protein</keyword>
<keyword id="KW-0221">Differentiation</keyword>
<keyword id="KW-0479">Metal-binding</keyword>
<keyword id="KW-0539">Nucleus</keyword>
<keyword id="KW-1267">Proteomics identification</keyword>
<keyword id="KW-1185">Reference proteome</keyword>
<keyword id="KW-0744">Spermatogenesis</keyword>
<keyword id="KW-0808">Transferase</keyword>
<keyword id="KW-0832">Ubl conjugation</keyword>
<keyword id="KW-0833">Ubl conjugation pathway</keyword>
<keyword id="KW-0862">Zinc</keyword>
<keyword id="KW-0863">Zinc-finger</keyword>
<comment type="function">
    <text evidence="4 5 6 7">E3 ubiquitin-protein ligase that promotes the ubiquitination of various substrates (PubMed:23645206, PubMed:25165885). In turn, participates in the regulation of many biological processes including cell cycle, apoptosis, osteoclastogenesis as well as innate or adaptive immunity (PubMed:25165885, PubMed:28708287). Acts as a negative regulator of NF-kappa-B-dependent transcription by promoting the ubiquitination and stabilization of the NF-kappa-B inhibitor TNFAIP3 (PubMed:25165885). May promote the ubiquitination of TRAF6 as well (PubMed:28708287). Also acts as a negative regulator of T-cell activation (PubMed:25165885). Inhibits cellular dsRNA responses and interferon production by targeting MAVS component for proteasomal degradation (PubMed:25165885). Ubiquitinates the CDK inhibitor CDKN1A leading to its degradationand probably also CDKN1B and CDKN1C (PubMed:23645206). This activity stimulates cell cycle G1-to-S phase transition and suppresses cellular senescence. May play a role in spermatogenesis.</text>
</comment>
<comment type="catalytic activity">
    <reaction evidence="4">
        <text>S-ubiquitinyl-[E2 ubiquitin-conjugating enzyme]-L-cysteine + [acceptor protein]-L-lysine = [E2 ubiquitin-conjugating enzyme]-L-cysteine + N(6)-ubiquitinyl-[acceptor protein]-L-lysine.</text>
        <dbReference type="EC" id="2.3.2.27"/>
    </reaction>
</comment>
<comment type="pathway">
    <text evidence="4">Protein modification; protein ubiquitination.</text>
</comment>
<comment type="subunit">
    <text evidence="4">Interacts with XAF1, the interaction increases XAF1 stability and proapoptotic effects, and may regulate IFN signaling.</text>
</comment>
<comment type="interaction">
    <interactant intactId="EBI-723587">
        <id>Q9Y508</id>
    </interactant>
    <interactant intactId="EBI-399080">
        <id>Q92993</id>
        <label>KAT5</label>
    </interactant>
    <organismsDiffer>false</organismsDiffer>
    <experiments>3</experiments>
</comment>
<comment type="interaction">
    <interactant intactId="EBI-723587">
        <id>Q9Y508</id>
    </interactant>
    <interactant intactId="EBI-11742507">
        <id>Q8TAP4-4</id>
        <label>LMO3</label>
    </interactant>
    <organismsDiffer>false</organismsDiffer>
    <experiments>3</experiments>
</comment>
<comment type="interaction">
    <interactant intactId="EBI-723587">
        <id>Q9Y508</id>
    </interactant>
    <interactant intactId="EBI-9090795">
        <id>Q15047-2</id>
        <label>SETDB1</label>
    </interactant>
    <organismsDiffer>false</organismsDiffer>
    <experiments>3</experiments>
</comment>
<comment type="interaction">
    <interactant intactId="EBI-723587">
        <id>Q9Y508</id>
    </interactant>
    <interactant intactId="EBI-743540">
        <id>P51668</id>
        <label>UBE2D1</label>
    </interactant>
    <organismsDiffer>false</organismsDiffer>
    <experiments>3</experiments>
</comment>
<comment type="interaction">
    <interactant intactId="EBI-723587">
        <id>Q9Y508</id>
    </interactant>
    <interactant intactId="EBI-347677">
        <id>P62837</id>
        <label>UBE2D2</label>
    </interactant>
    <organismsDiffer>false</organismsDiffer>
    <experiments>3</experiments>
</comment>
<comment type="interaction">
    <interactant intactId="EBI-723587">
        <id>Q9Y508</id>
    </interactant>
    <interactant intactId="EBI-473850">
        <id>P61086</id>
        <label>UBE2K</label>
    </interactant>
    <organismsDiffer>false</organismsDiffer>
    <experiments>3</experiments>
</comment>
<comment type="interaction">
    <interactant intactId="EBI-723587">
        <id>Q9Y508</id>
    </interactant>
    <interactant intactId="EBI-2815120">
        <id>Q6GPH4</id>
        <label>XAF1</label>
    </interactant>
    <organismsDiffer>false</organismsDiffer>
    <experiments>8</experiments>
</comment>
<comment type="interaction">
    <interactant intactId="EBI-723587">
        <id>Q9Y508</id>
    </interactant>
    <interactant intactId="EBI-359832">
        <id>P61981</id>
        <label>YWHAG</label>
    </interactant>
    <organismsDiffer>false</organismsDiffer>
    <experiments>3</experiments>
</comment>
<comment type="subcellular location">
    <subcellularLocation>
        <location evidence="4">Cytoplasm</location>
    </subcellularLocation>
    <subcellularLocation>
        <location evidence="4">Nucleus</location>
    </subcellularLocation>
</comment>
<comment type="alternative products">
    <event type="alternative splicing"/>
    <isoform>
        <id>Q9Y508-1</id>
        <name>1</name>
        <sequence type="displayed"/>
    </isoform>
    <isoform>
        <id>Q9Y508-2</id>
        <name>2</name>
        <sequence type="described" ref="VSP_036843 VSP_036844"/>
    </isoform>
</comment>
<comment type="tissue specificity">
    <text evidence="3">Expressed in numerous tissues, including skin, CD4 lymphocytes and dendritic cells. Highest levels in testis.</text>
</comment>
<comment type="PTM">
    <text evidence="4">Autoubiquitinated. Polyubiquitinated in the presence of E2 enzymes UBE2D1, UBE2D2 and UBE2D3, but only monoubiquitinated in the presence of UBE2E1.</text>
</comment>
<comment type="sequence caution" evidence="9">
    <conflict type="erroneous initiation">
        <sequence resource="EMBL-CDS" id="CAE45709"/>
    </conflict>
</comment>
<sequence>MAAQQRDCGGAAQLAGPAAEADPLGRFTCPVCLEVYEKPVQVPCGHVFCSACLQECLKPKKPVCGVCRSALAPGVRAVELERQIESTETSCHGCRKNFFLSKIRSHVATCSKYQNYIMEGVKATIKDASLQPRNVPNRYTFPCPYCPEKNFDQEGLVEHCKLFHSTDTKSVVCPICASMPWGDPNYRSANFREHIQRRHRFSYDTFVDYDVDEEDMMNQVLQRSIIDQ</sequence>
<evidence type="ECO:0000255" key="1">
    <source>
        <dbReference type="PROSITE-ProRule" id="PRU00175"/>
    </source>
</evidence>
<evidence type="ECO:0000255" key="2">
    <source>
        <dbReference type="PROSITE-ProRule" id="PRU01144"/>
    </source>
</evidence>
<evidence type="ECO:0000269" key="3">
    <source>
    </source>
</evidence>
<evidence type="ECO:0000269" key="4">
    <source>
    </source>
</evidence>
<evidence type="ECO:0000269" key="5">
    <source>
    </source>
</evidence>
<evidence type="ECO:0000269" key="6">
    <source>
    </source>
</evidence>
<evidence type="ECO:0000269" key="7">
    <source>
    </source>
</evidence>
<evidence type="ECO:0000303" key="8">
    <source>
    </source>
</evidence>
<evidence type="ECO:0000305" key="9"/>
<evidence type="ECO:0007744" key="10">
    <source>
    </source>
</evidence>
<name>RN114_HUMAN</name>
<accession>Q9Y508</accession>
<accession>B2RDQ9</accession>
<accession>B4DWY5</accession>
<accession>E1P627</accession>
<accession>Q6N0B0</accession>
<protein>
    <recommendedName>
        <fullName>E3 ubiquitin-protein ligase RNF114</fullName>
        <ecNumber evidence="4">2.3.2.27</ecNumber>
    </recommendedName>
    <alternativeName>
        <fullName>RING finger protein 114</fullName>
    </alternativeName>
    <alternativeName>
        <fullName evidence="9">RING-type E3 ubiquitin transferase RNF114</fullName>
    </alternativeName>
    <alternativeName>
        <fullName>Zinc finger protein 228</fullName>
    </alternativeName>
    <alternativeName>
        <fullName>Zinc finger protein 313</fullName>
    </alternativeName>
</protein>
<proteinExistence type="evidence at protein level"/>
<organism>
    <name type="scientific">Homo sapiens</name>
    <name type="common">Human</name>
    <dbReference type="NCBI Taxonomy" id="9606"/>
    <lineage>
        <taxon>Eukaryota</taxon>
        <taxon>Metazoa</taxon>
        <taxon>Chordata</taxon>
        <taxon>Craniata</taxon>
        <taxon>Vertebrata</taxon>
        <taxon>Euteleostomi</taxon>
        <taxon>Mammalia</taxon>
        <taxon>Eutheria</taxon>
        <taxon>Euarchontoglires</taxon>
        <taxon>Primates</taxon>
        <taxon>Haplorrhini</taxon>
        <taxon>Catarrhini</taxon>
        <taxon>Hominidae</taxon>
        <taxon>Homo</taxon>
    </lineage>
</organism>
<gene>
    <name type="primary">RNF114</name>
    <name type="synonym">ZNF228</name>
    <name type="synonym">ZNF313</name>
</gene>